<accession>Q86UW8</accession>
<accession>A5PKW5</accession>
<accession>Q96PW2</accession>
<keyword id="KW-1015">Disulfide bond</keyword>
<keyword id="KW-0272">Extracellular matrix</keyword>
<keyword id="KW-0325">Glycoprotein</keyword>
<keyword id="KW-0373">Hyaluronic acid</keyword>
<keyword id="KW-0393">Immunoglobulin domain</keyword>
<keyword id="KW-1267">Proteomics identification</keyword>
<keyword id="KW-1185">Reference proteome</keyword>
<keyword id="KW-0677">Repeat</keyword>
<keyword id="KW-0964">Secreted</keyword>
<keyword id="KW-0732">Signal</keyword>
<protein>
    <recommendedName>
        <fullName>Hyaluronan and proteoglycan link protein 4</fullName>
    </recommendedName>
    <alternativeName>
        <fullName>Brain link protein 2</fullName>
    </alternativeName>
</protein>
<reference evidence="7" key="1">
    <citation type="journal article" date="2003" name="J. Biol. Chem.">
        <title>A hyaluronan binding link protein gene family whose members are physically linked adjacent to chondroitin sulfate proteoglycan core protein genes: the missing links.</title>
        <authorList>
            <person name="Spicer A.P."/>
            <person name="Joo A."/>
            <person name="Bowling R.A. Jr."/>
        </authorList>
    </citation>
    <scope>NUCLEOTIDE SEQUENCE [MRNA]</scope>
    <scope>TISSUE SPECIFICITY</scope>
</reference>
<reference evidence="7" key="2">
    <citation type="journal article" date="2003" name="Mol. Cell. Neurosci.">
        <title>Molecular cloning of Bral2, a novel brain-specific link protein, and immunohistochemical colocalization with brevican in perineuronal nets.</title>
        <authorList>
            <person name="Bekku Y."/>
            <person name="Su W.-D."/>
            <person name="Hirakawa S."/>
            <person name="Faessler R."/>
            <person name="Ohtsuka A."/>
            <person name="Kang J.S."/>
            <person name="Sanders J."/>
            <person name="Murakami T."/>
            <person name="Ninomiya Y."/>
            <person name="Oohashi T."/>
        </authorList>
    </citation>
    <scope>NUCLEOTIDE SEQUENCE [MRNA]</scope>
</reference>
<reference evidence="9" key="3">
    <citation type="journal article" date="2001" name="DNA Res.">
        <title>Prediction of the coding sequences of unidentified human genes. XXI. The complete sequences of 60 new cDNA clones from brain which code for large proteins.</title>
        <authorList>
            <person name="Nagase T."/>
            <person name="Kikuno R."/>
            <person name="Ohara O."/>
        </authorList>
    </citation>
    <scope>NUCLEOTIDE SEQUENCE [LARGE SCALE MRNA]</scope>
    <source>
        <tissue evidence="9">Brain</tissue>
    </source>
</reference>
<reference key="4">
    <citation type="submission" date="2005-07" db="EMBL/GenBank/DDBJ databases">
        <authorList>
            <person name="Mural R.J."/>
            <person name="Istrail S."/>
            <person name="Sutton G.G."/>
            <person name="Florea L."/>
            <person name="Halpern A.L."/>
            <person name="Mobarry C.M."/>
            <person name="Lippert R."/>
            <person name="Walenz B."/>
            <person name="Shatkay H."/>
            <person name="Dew I."/>
            <person name="Miller J.R."/>
            <person name="Flanigan M.J."/>
            <person name="Edwards N.J."/>
            <person name="Bolanos R."/>
            <person name="Fasulo D."/>
            <person name="Halldorsson B.V."/>
            <person name="Hannenhalli S."/>
            <person name="Turner R."/>
            <person name="Yooseph S."/>
            <person name="Lu F."/>
            <person name="Nusskern D.R."/>
            <person name="Shue B.C."/>
            <person name="Zheng X.H."/>
            <person name="Zhong F."/>
            <person name="Delcher A.L."/>
            <person name="Huson D.H."/>
            <person name="Kravitz S.A."/>
            <person name="Mouchard L."/>
            <person name="Reinert K."/>
            <person name="Remington K.A."/>
            <person name="Clark A.G."/>
            <person name="Waterman M.S."/>
            <person name="Eichler E.E."/>
            <person name="Adams M.D."/>
            <person name="Hunkapiller M.W."/>
            <person name="Myers E.W."/>
            <person name="Venter J.C."/>
        </authorList>
    </citation>
    <scope>NUCLEOTIDE SEQUENCE [LARGE SCALE GENOMIC DNA]</scope>
</reference>
<reference key="5">
    <citation type="journal article" date="2004" name="Genome Res.">
        <title>The status, quality, and expansion of the NIH full-length cDNA project: the Mammalian Gene Collection (MGC).</title>
        <authorList>
            <consortium name="The MGC Project Team"/>
        </authorList>
    </citation>
    <scope>NUCLEOTIDE SEQUENCE [LARGE SCALE MRNA]</scope>
</reference>
<organism evidence="8">
    <name type="scientific">Homo sapiens</name>
    <name type="common">Human</name>
    <dbReference type="NCBI Taxonomy" id="9606"/>
    <lineage>
        <taxon>Eukaryota</taxon>
        <taxon>Metazoa</taxon>
        <taxon>Chordata</taxon>
        <taxon>Craniata</taxon>
        <taxon>Vertebrata</taxon>
        <taxon>Euteleostomi</taxon>
        <taxon>Mammalia</taxon>
        <taxon>Eutheria</taxon>
        <taxon>Euarchontoglires</taxon>
        <taxon>Primates</taxon>
        <taxon>Haplorrhini</taxon>
        <taxon>Catarrhini</taxon>
        <taxon>Hominidae</taxon>
        <taxon>Homo</taxon>
    </lineage>
</organism>
<sequence length="402" mass="42801">MVCARAALGPGALWAAAWGVLLLTAPAGAQRGRKKVVHVLEGESGSVVVQTAPGQVVSHRGGTIVLPCRYHYEAAAHGHDGVRLKWTKVVDPLAFTDVFVALGPQHRAFGSYRGRAELQGDGPGDASLVLRNVTLQDYGRYECEVTNELEDDAGMVKLDLEGVVFPYHPRGGRYKLTFAEAQRACAEQDGILASAEQLHAAWRDGLDWCNAGWLRDGSVQYPVNRPREPCGGLGGTGSAGGGGDANGGLRNYGYRHNAEERYDAFCFTSNLPGRVFFLKPLRPVPFSGAARACAARGAAVAKVGQLFAAWKLQLLDRCTAGWLADGSARYPIVNPRARCGGRRPGVRSLGFPDATRRLFGVYCYRAPGAPDPAPGGWGWGWAGGGGWAGGARDPAAWTPLHV</sequence>
<evidence type="ECO:0000250" key="1">
    <source>
        <dbReference type="UniProtKB" id="P03994"/>
    </source>
</evidence>
<evidence type="ECO:0000250" key="2">
    <source>
        <dbReference type="UniProtKB" id="Q80WM4"/>
    </source>
</evidence>
<evidence type="ECO:0000250" key="3">
    <source>
        <dbReference type="UniProtKB" id="Q9ESM3"/>
    </source>
</evidence>
<evidence type="ECO:0000255" key="4"/>
<evidence type="ECO:0000255" key="5">
    <source>
        <dbReference type="PROSITE-ProRule" id="PRU00323"/>
    </source>
</evidence>
<evidence type="ECO:0000269" key="6">
    <source>
    </source>
</evidence>
<evidence type="ECO:0000305" key="7"/>
<evidence type="ECO:0000312" key="8">
    <source>
        <dbReference type="EMBL" id="AAP22048.1"/>
    </source>
</evidence>
<evidence type="ECO:0000312" key="9">
    <source>
        <dbReference type="EMBL" id="BAB67819.1"/>
    </source>
</evidence>
<proteinExistence type="evidence at protein level"/>
<name>HPLN4_HUMAN</name>
<dbReference type="EMBL" id="AY262756">
    <property type="protein sequence ID" value="AAP22048.1"/>
    <property type="molecule type" value="mRNA"/>
</dbReference>
<dbReference type="EMBL" id="AB107883">
    <property type="protein sequence ID" value="BAC79077.1"/>
    <property type="molecule type" value="mRNA"/>
</dbReference>
<dbReference type="EMBL" id="AB067513">
    <property type="protein sequence ID" value="BAB67819.1"/>
    <property type="status" value="ALT_INIT"/>
    <property type="molecule type" value="mRNA"/>
</dbReference>
<dbReference type="EMBL" id="CH471106">
    <property type="protein sequence ID" value="EAW84804.1"/>
    <property type="molecule type" value="Genomic_DNA"/>
</dbReference>
<dbReference type="EMBL" id="BC142644">
    <property type="protein sequence ID" value="AAI42645.1"/>
    <property type="molecule type" value="mRNA"/>
</dbReference>
<dbReference type="EMBL" id="BC142698">
    <property type="protein sequence ID" value="AAI42699.1"/>
    <property type="molecule type" value="mRNA"/>
</dbReference>
<dbReference type="CCDS" id="CCDS12398.1"/>
<dbReference type="RefSeq" id="NP_075378.1">
    <property type="nucleotide sequence ID" value="NM_023002.3"/>
</dbReference>
<dbReference type="SMR" id="Q86UW8"/>
<dbReference type="BioGRID" id="135639">
    <property type="interactions" value="2"/>
</dbReference>
<dbReference type="FunCoup" id="Q86UW8">
    <property type="interactions" value="76"/>
</dbReference>
<dbReference type="STRING" id="9606.ENSP00000291481"/>
<dbReference type="GlyCosmos" id="Q86UW8">
    <property type="glycosylation" value="1 site, No reported glycans"/>
</dbReference>
<dbReference type="GlyGen" id="Q86UW8">
    <property type="glycosylation" value="1 site"/>
</dbReference>
<dbReference type="iPTMnet" id="Q86UW8"/>
<dbReference type="PhosphoSitePlus" id="Q86UW8"/>
<dbReference type="BioMuta" id="HAPLN4"/>
<dbReference type="DMDM" id="47605684"/>
<dbReference type="MassIVE" id="Q86UW8"/>
<dbReference type="PaxDb" id="9606-ENSP00000291481"/>
<dbReference type="PeptideAtlas" id="Q86UW8"/>
<dbReference type="ProteomicsDB" id="69922"/>
<dbReference type="Antibodypedia" id="28414">
    <property type="antibodies" value="190 antibodies from 28 providers"/>
</dbReference>
<dbReference type="DNASU" id="404037"/>
<dbReference type="Ensembl" id="ENST00000291481.8">
    <property type="protein sequence ID" value="ENSP00000291481.5"/>
    <property type="gene ID" value="ENSG00000187664.9"/>
</dbReference>
<dbReference type="GeneID" id="404037"/>
<dbReference type="KEGG" id="hsa:404037"/>
<dbReference type="MANE-Select" id="ENST00000291481.8">
    <property type="protein sequence ID" value="ENSP00000291481.5"/>
    <property type="RefSeq nucleotide sequence ID" value="NM_023002.3"/>
    <property type="RefSeq protein sequence ID" value="NP_075378.1"/>
</dbReference>
<dbReference type="UCSC" id="uc002nmb.5">
    <property type="organism name" value="human"/>
</dbReference>
<dbReference type="AGR" id="HGNC:31357"/>
<dbReference type="CTD" id="404037"/>
<dbReference type="DisGeNET" id="404037"/>
<dbReference type="GeneCards" id="HAPLN4"/>
<dbReference type="HGNC" id="HGNC:31357">
    <property type="gene designation" value="HAPLN4"/>
</dbReference>
<dbReference type="HPA" id="ENSG00000187664">
    <property type="expression patterns" value="Group enriched (brain, intestine, liver)"/>
</dbReference>
<dbReference type="MIM" id="619710">
    <property type="type" value="gene"/>
</dbReference>
<dbReference type="neXtProt" id="NX_Q86UW8"/>
<dbReference type="PharmGKB" id="PA134886721"/>
<dbReference type="VEuPathDB" id="HostDB:ENSG00000187664"/>
<dbReference type="eggNOG" id="ENOG502QRG1">
    <property type="taxonomic scope" value="Eukaryota"/>
</dbReference>
<dbReference type="GeneTree" id="ENSGT00940000160926"/>
<dbReference type="HOGENOM" id="CLU_052285_1_0_1"/>
<dbReference type="InParanoid" id="Q86UW8"/>
<dbReference type="OMA" id="QACLQQD"/>
<dbReference type="OrthoDB" id="5359219at2759"/>
<dbReference type="PAN-GO" id="Q86UW8">
    <property type="GO annotations" value="3 GO annotations based on evolutionary models"/>
</dbReference>
<dbReference type="PhylomeDB" id="Q86UW8"/>
<dbReference type="TreeFam" id="TF332134"/>
<dbReference type="PathwayCommons" id="Q86UW8"/>
<dbReference type="BioGRID-ORCS" id="404037">
    <property type="hits" value="12 hits in 1138 CRISPR screens"/>
</dbReference>
<dbReference type="GenomeRNAi" id="404037"/>
<dbReference type="Pharos" id="Q86UW8">
    <property type="development level" value="Tbio"/>
</dbReference>
<dbReference type="PRO" id="PR:Q86UW8"/>
<dbReference type="Proteomes" id="UP000005640">
    <property type="component" value="Chromosome 19"/>
</dbReference>
<dbReference type="RNAct" id="Q86UW8">
    <property type="molecule type" value="protein"/>
</dbReference>
<dbReference type="Bgee" id="ENSG00000187664">
    <property type="expression patterns" value="Expressed in primary visual cortex and 77 other cell types or tissues"/>
</dbReference>
<dbReference type="GO" id="GO:0005615">
    <property type="term" value="C:extracellular space"/>
    <property type="evidence" value="ECO:0000318"/>
    <property type="project" value="GO_Central"/>
</dbReference>
<dbReference type="GO" id="GO:0072534">
    <property type="term" value="C:perineuronal net"/>
    <property type="evidence" value="ECO:0000250"/>
    <property type="project" value="UniProtKB"/>
</dbReference>
<dbReference type="GO" id="GO:0045202">
    <property type="term" value="C:synapse"/>
    <property type="evidence" value="ECO:0000318"/>
    <property type="project" value="GO_Central"/>
</dbReference>
<dbReference type="GO" id="GO:0005540">
    <property type="term" value="F:hyaluronic acid binding"/>
    <property type="evidence" value="ECO:0007669"/>
    <property type="project" value="UniProtKB-KW"/>
</dbReference>
<dbReference type="GO" id="GO:0150043">
    <property type="term" value="F:structural constituent of synapse-associated extracellular matrix"/>
    <property type="evidence" value="ECO:0000250"/>
    <property type="project" value="UniProtKB"/>
</dbReference>
<dbReference type="GO" id="GO:0007155">
    <property type="term" value="P:cell adhesion"/>
    <property type="evidence" value="ECO:0007669"/>
    <property type="project" value="InterPro"/>
</dbReference>
<dbReference type="GO" id="GO:0007417">
    <property type="term" value="P:central nervous system development"/>
    <property type="evidence" value="ECO:0000318"/>
    <property type="project" value="GO_Central"/>
</dbReference>
<dbReference type="GO" id="GO:1904862">
    <property type="term" value="P:inhibitory synapse assembly"/>
    <property type="evidence" value="ECO:0000250"/>
    <property type="project" value="UniProtKB"/>
</dbReference>
<dbReference type="GO" id="GO:0001501">
    <property type="term" value="P:skeletal system development"/>
    <property type="evidence" value="ECO:0000318"/>
    <property type="project" value="GO_Central"/>
</dbReference>
<dbReference type="GO" id="GO:0051932">
    <property type="term" value="P:synaptic transmission, GABAergic"/>
    <property type="evidence" value="ECO:0000250"/>
    <property type="project" value="UniProtKB"/>
</dbReference>
<dbReference type="FunFam" id="2.60.40.10:FF:000536">
    <property type="entry name" value="Hyaluronan and proteoglycan link protein 4"/>
    <property type="match status" value="1"/>
</dbReference>
<dbReference type="FunFam" id="3.10.100.10:FF:000001">
    <property type="entry name" value="Hyaluronan proteoglycan link protein 1"/>
    <property type="match status" value="1"/>
</dbReference>
<dbReference type="FunFam" id="3.10.100.10:FF:000002">
    <property type="entry name" value="Hyaluronan proteoglycan link protein 1"/>
    <property type="match status" value="1"/>
</dbReference>
<dbReference type="Gene3D" id="2.60.40.10">
    <property type="entry name" value="Immunoglobulins"/>
    <property type="match status" value="1"/>
</dbReference>
<dbReference type="Gene3D" id="3.10.100.10">
    <property type="entry name" value="Mannose-Binding Protein A, subunit A"/>
    <property type="match status" value="2"/>
</dbReference>
<dbReference type="InterPro" id="IPR016186">
    <property type="entry name" value="C-type_lectin-like/link_sf"/>
</dbReference>
<dbReference type="InterPro" id="IPR016187">
    <property type="entry name" value="CTDL_fold"/>
</dbReference>
<dbReference type="InterPro" id="IPR050691">
    <property type="entry name" value="Hyaluronan_bind_Proteoglycan"/>
</dbReference>
<dbReference type="InterPro" id="IPR007110">
    <property type="entry name" value="Ig-like_dom"/>
</dbReference>
<dbReference type="InterPro" id="IPR036179">
    <property type="entry name" value="Ig-like_dom_sf"/>
</dbReference>
<dbReference type="InterPro" id="IPR013783">
    <property type="entry name" value="Ig-like_fold"/>
</dbReference>
<dbReference type="InterPro" id="IPR003599">
    <property type="entry name" value="Ig_sub"/>
</dbReference>
<dbReference type="InterPro" id="IPR003598">
    <property type="entry name" value="Ig_sub2"/>
</dbReference>
<dbReference type="InterPro" id="IPR013106">
    <property type="entry name" value="Ig_V-set"/>
</dbReference>
<dbReference type="InterPro" id="IPR000538">
    <property type="entry name" value="Link_dom"/>
</dbReference>
<dbReference type="PANTHER" id="PTHR22804">
    <property type="entry name" value="AGGRECAN/VERSICAN PROTEOGLYCAN"/>
    <property type="match status" value="1"/>
</dbReference>
<dbReference type="PANTHER" id="PTHR22804:SF11">
    <property type="entry name" value="HYALURONAN AND PROTEOGLYCAN LINK PROTEIN 4"/>
    <property type="match status" value="1"/>
</dbReference>
<dbReference type="Pfam" id="PF07686">
    <property type="entry name" value="V-set"/>
    <property type="match status" value="1"/>
</dbReference>
<dbReference type="Pfam" id="PF00193">
    <property type="entry name" value="Xlink"/>
    <property type="match status" value="2"/>
</dbReference>
<dbReference type="PRINTS" id="PR01265">
    <property type="entry name" value="LINKMODULE"/>
</dbReference>
<dbReference type="SMART" id="SM00409">
    <property type="entry name" value="IG"/>
    <property type="match status" value="1"/>
</dbReference>
<dbReference type="SMART" id="SM00408">
    <property type="entry name" value="IGc2"/>
    <property type="match status" value="1"/>
</dbReference>
<dbReference type="SMART" id="SM00406">
    <property type="entry name" value="IGv"/>
    <property type="match status" value="1"/>
</dbReference>
<dbReference type="SMART" id="SM00445">
    <property type="entry name" value="LINK"/>
    <property type="match status" value="2"/>
</dbReference>
<dbReference type="SUPFAM" id="SSF56436">
    <property type="entry name" value="C-type lectin-like"/>
    <property type="match status" value="2"/>
</dbReference>
<dbReference type="SUPFAM" id="SSF48726">
    <property type="entry name" value="Immunoglobulin"/>
    <property type="match status" value="1"/>
</dbReference>
<dbReference type="PROSITE" id="PS50835">
    <property type="entry name" value="IG_LIKE"/>
    <property type="match status" value="1"/>
</dbReference>
<dbReference type="PROSITE" id="PS01241">
    <property type="entry name" value="LINK_1"/>
    <property type="match status" value="1"/>
</dbReference>
<dbReference type="PROSITE" id="PS50963">
    <property type="entry name" value="LINK_2"/>
    <property type="match status" value="2"/>
</dbReference>
<gene>
    <name type="primary">HAPLN4</name>
    <name type="synonym">BRAL2</name>
    <name type="synonym">KIAA1926</name>
</gene>
<feature type="signal peptide" evidence="4">
    <location>
        <begin position="1"/>
        <end position="29"/>
    </location>
</feature>
<feature type="chain" id="PRO_0000013192" description="Hyaluronan and proteoglycan link protein 4" evidence="4">
    <location>
        <begin position="30"/>
        <end position="402"/>
    </location>
</feature>
<feature type="domain" description="Ig-like C2-type">
    <location>
        <begin position="46"/>
        <end position="161"/>
    </location>
</feature>
<feature type="domain" description="Link 1" evidence="5 7">
    <location>
        <begin position="163"/>
        <end position="268"/>
    </location>
</feature>
<feature type="domain" description="Link 2" evidence="5 7">
    <location>
        <begin position="273"/>
        <end position="365"/>
    </location>
</feature>
<feature type="glycosylation site" description="N-linked (GlcNAc...) asparagine" evidence="7">
    <location>
        <position position="132"/>
    </location>
</feature>
<feature type="disulfide bond" evidence="1">
    <location>
        <begin position="68"/>
        <end position="143"/>
    </location>
</feature>
<feature type="disulfide bond" evidence="1">
    <location>
        <begin position="185"/>
        <end position="266"/>
    </location>
</feature>
<feature type="disulfide bond" evidence="1">
    <location>
        <begin position="209"/>
        <end position="230"/>
    </location>
</feature>
<feature type="disulfide bond" evidence="1">
    <location>
        <begin position="293"/>
        <end position="363"/>
    </location>
</feature>
<feature type="disulfide bond" evidence="1">
    <location>
        <begin position="318"/>
        <end position="339"/>
    </location>
</feature>
<comment type="function">
    <text evidence="2">Essential for the proper localization of brevican (BCAN), mainly as a perineuronal nets (PNNs)-type deposition in the brainstem and cerebellum thereby playing a key role in the formation and structural organization of PNNs (By similarity). Contributes to the formation and transmission of inhibitory GABAergic synapses between Purkinje cells and deep cerebellar nuclei neurons (By similarity).</text>
</comment>
<comment type="subcellular location">
    <subcellularLocation>
        <location evidence="3">Secreted</location>
        <location evidence="3">Extracellular space</location>
        <location evidence="3">Extracellular matrix</location>
    </subcellularLocation>
</comment>
<comment type="tissue specificity">
    <text evidence="6">Expressed predominantly in brain.</text>
</comment>
<comment type="similarity">
    <text evidence="7">Belongs to the HAPLN family.</text>
</comment>
<comment type="sequence caution" evidence="7">
    <conflict type="erroneous initiation">
        <sequence resource="EMBL-CDS" id="BAB67819"/>
    </conflict>
    <text>Extended N-terminus.</text>
</comment>